<gene>
    <name evidence="1" type="primary">rplF</name>
    <name type="ordered locus">M6_Spy0108</name>
</gene>
<keyword id="KW-0687">Ribonucleoprotein</keyword>
<keyword id="KW-0689">Ribosomal protein</keyword>
<keyword id="KW-0694">RNA-binding</keyword>
<keyword id="KW-0699">rRNA-binding</keyword>
<evidence type="ECO:0000255" key="1">
    <source>
        <dbReference type="HAMAP-Rule" id="MF_01365"/>
    </source>
</evidence>
<evidence type="ECO:0000305" key="2"/>
<feature type="chain" id="PRO_0000260954" description="Large ribosomal subunit protein uL6">
    <location>
        <begin position="1"/>
        <end position="178"/>
    </location>
</feature>
<sequence>MSRIGNKVITMPAGVELTNNNNVITVKGPKGELTREFNKNIEIKVEGTEITVVRPNDSKEMKTIHGTTRANLNNMVVGVSEGFKKDLEMKGVGYRAQLQGTKLVLSVGKSHQDEVEAPEGITFTVANPTSISVEGINKEVVGQTAAYIRSLRSPEPYKGKGIRYVGEYVRLKEGKTGK</sequence>
<comment type="function">
    <text evidence="1">This protein binds to the 23S rRNA, and is important in its secondary structure. It is located near the subunit interface in the base of the L7/L12 stalk, and near the tRNA binding site of the peptidyltransferase center.</text>
</comment>
<comment type="subunit">
    <text evidence="1">Part of the 50S ribosomal subunit.</text>
</comment>
<comment type="similarity">
    <text evidence="1">Belongs to the universal ribosomal protein uL6 family.</text>
</comment>
<organism>
    <name type="scientific">Streptococcus pyogenes serotype M6 (strain ATCC BAA-946 / MGAS10394)</name>
    <dbReference type="NCBI Taxonomy" id="286636"/>
    <lineage>
        <taxon>Bacteria</taxon>
        <taxon>Bacillati</taxon>
        <taxon>Bacillota</taxon>
        <taxon>Bacilli</taxon>
        <taxon>Lactobacillales</taxon>
        <taxon>Streptococcaceae</taxon>
        <taxon>Streptococcus</taxon>
    </lineage>
</organism>
<proteinExistence type="inferred from homology"/>
<reference key="1">
    <citation type="journal article" date="2004" name="J. Infect. Dis.">
        <title>Progress toward characterization of the group A Streptococcus metagenome: complete genome sequence of a macrolide-resistant serotype M6 strain.</title>
        <authorList>
            <person name="Banks D.J."/>
            <person name="Porcella S.F."/>
            <person name="Barbian K.D."/>
            <person name="Beres S.B."/>
            <person name="Philips L.E."/>
            <person name="Voyich J.M."/>
            <person name="DeLeo F.R."/>
            <person name="Martin J.M."/>
            <person name="Somerville G.A."/>
            <person name="Musser J.M."/>
        </authorList>
    </citation>
    <scope>NUCLEOTIDE SEQUENCE [LARGE SCALE GENOMIC DNA]</scope>
    <source>
        <strain>ATCC BAA-946 / MGAS10394</strain>
    </source>
</reference>
<protein>
    <recommendedName>
        <fullName evidence="1">Large ribosomal subunit protein uL6</fullName>
    </recommendedName>
    <alternativeName>
        <fullName evidence="2">50S ribosomal protein L6</fullName>
    </alternativeName>
</protein>
<dbReference type="EMBL" id="CP000003">
    <property type="protein sequence ID" value="AAT86243.1"/>
    <property type="molecule type" value="Genomic_DNA"/>
</dbReference>
<dbReference type="RefSeq" id="WP_002986629.1">
    <property type="nucleotide sequence ID" value="NC_006086.1"/>
</dbReference>
<dbReference type="SMR" id="Q5XEC0"/>
<dbReference type="GeneID" id="69900041"/>
<dbReference type="KEGG" id="spa:M6_Spy0108"/>
<dbReference type="HOGENOM" id="CLU_065464_1_2_9"/>
<dbReference type="Proteomes" id="UP000001167">
    <property type="component" value="Chromosome"/>
</dbReference>
<dbReference type="GO" id="GO:0022625">
    <property type="term" value="C:cytosolic large ribosomal subunit"/>
    <property type="evidence" value="ECO:0007669"/>
    <property type="project" value="TreeGrafter"/>
</dbReference>
<dbReference type="GO" id="GO:0019843">
    <property type="term" value="F:rRNA binding"/>
    <property type="evidence" value="ECO:0007669"/>
    <property type="project" value="UniProtKB-UniRule"/>
</dbReference>
<dbReference type="GO" id="GO:0003735">
    <property type="term" value="F:structural constituent of ribosome"/>
    <property type="evidence" value="ECO:0007669"/>
    <property type="project" value="InterPro"/>
</dbReference>
<dbReference type="GO" id="GO:0002181">
    <property type="term" value="P:cytoplasmic translation"/>
    <property type="evidence" value="ECO:0007669"/>
    <property type="project" value="TreeGrafter"/>
</dbReference>
<dbReference type="FunFam" id="3.90.930.12:FF:000001">
    <property type="entry name" value="50S ribosomal protein L6"/>
    <property type="match status" value="1"/>
</dbReference>
<dbReference type="FunFam" id="3.90.930.12:FF:000002">
    <property type="entry name" value="50S ribosomal protein L6"/>
    <property type="match status" value="1"/>
</dbReference>
<dbReference type="Gene3D" id="3.90.930.12">
    <property type="entry name" value="Ribosomal protein L6, alpha-beta domain"/>
    <property type="match status" value="2"/>
</dbReference>
<dbReference type="HAMAP" id="MF_01365_B">
    <property type="entry name" value="Ribosomal_uL6_B"/>
    <property type="match status" value="1"/>
</dbReference>
<dbReference type="InterPro" id="IPR000702">
    <property type="entry name" value="Ribosomal_uL6-like"/>
</dbReference>
<dbReference type="InterPro" id="IPR036789">
    <property type="entry name" value="Ribosomal_uL6-like_a/b-dom_sf"/>
</dbReference>
<dbReference type="InterPro" id="IPR020040">
    <property type="entry name" value="Ribosomal_uL6_a/b-dom"/>
</dbReference>
<dbReference type="InterPro" id="IPR019906">
    <property type="entry name" value="Ribosomal_uL6_bac-type"/>
</dbReference>
<dbReference type="InterPro" id="IPR002358">
    <property type="entry name" value="Ribosomal_uL6_CS"/>
</dbReference>
<dbReference type="NCBIfam" id="TIGR03654">
    <property type="entry name" value="L6_bact"/>
    <property type="match status" value="1"/>
</dbReference>
<dbReference type="PANTHER" id="PTHR11655">
    <property type="entry name" value="60S/50S RIBOSOMAL PROTEIN L6/L9"/>
    <property type="match status" value="1"/>
</dbReference>
<dbReference type="PANTHER" id="PTHR11655:SF14">
    <property type="entry name" value="LARGE RIBOSOMAL SUBUNIT PROTEIN UL6M"/>
    <property type="match status" value="1"/>
</dbReference>
<dbReference type="Pfam" id="PF00347">
    <property type="entry name" value="Ribosomal_L6"/>
    <property type="match status" value="2"/>
</dbReference>
<dbReference type="PIRSF" id="PIRSF002162">
    <property type="entry name" value="Ribosomal_L6"/>
    <property type="match status" value="1"/>
</dbReference>
<dbReference type="PRINTS" id="PR00059">
    <property type="entry name" value="RIBOSOMALL6"/>
</dbReference>
<dbReference type="SUPFAM" id="SSF56053">
    <property type="entry name" value="Ribosomal protein L6"/>
    <property type="match status" value="2"/>
</dbReference>
<dbReference type="PROSITE" id="PS00525">
    <property type="entry name" value="RIBOSOMAL_L6_1"/>
    <property type="match status" value="1"/>
</dbReference>
<name>RL6_STRP6</name>
<accession>Q5XEC0</accession>